<sequence length="399" mass="43172">MIKNQSQAGRYGDFGGQYVPETLMTELQRLDRAFQHYRQDAHFQEELTDLLNNYANRPSLLYHAQRLSDQLGGAQIYFKREDLNHTGAHKINNVLGQALLAKKMGKKRLIAETGAGQHGVATATIAALFGMECDVFMGKKDTNRQALNVYRMQLLGAKVHPVTTGSMVLKDAINAALQEWTRRCDDTAYIMGSATGPHPFPMMVHEFQSVISVEARQQILDQTGHLPDAVVACVGGGSNAIGSFAAFLDDTSVELIGCEAAGKGVQTPLTAATIERGRTGIFHGMKSLFLQDKAGQIAPVYSISAGLDYPGVGPEHAYLAASGRAQYVGINDDQAVQAFELIAKVEGVICAIESAHAVAYVQQLAPTMRRDQTIICTLSGRGDKDVAAIAKYRGVTIDD</sequence>
<proteinExistence type="inferred from homology"/>
<keyword id="KW-0028">Amino-acid biosynthesis</keyword>
<keyword id="KW-0057">Aromatic amino acid biosynthesis</keyword>
<keyword id="KW-0456">Lyase</keyword>
<keyword id="KW-0663">Pyridoxal phosphate</keyword>
<keyword id="KW-1185">Reference proteome</keyword>
<keyword id="KW-0822">Tryptophan biosynthesis</keyword>
<accession>Q88WI0</accession>
<accession>F9UP23</accession>
<gene>
    <name evidence="1" type="primary">trpB</name>
    <name type="ordered locus">lp_1657</name>
</gene>
<name>TRPB_LACPL</name>
<dbReference type="EC" id="4.2.1.20" evidence="1"/>
<dbReference type="EMBL" id="AL935263">
    <property type="protein sequence ID" value="CCC78962.1"/>
    <property type="molecule type" value="Genomic_DNA"/>
</dbReference>
<dbReference type="RefSeq" id="WP_011101492.1">
    <property type="nucleotide sequence ID" value="NC_004567.2"/>
</dbReference>
<dbReference type="RefSeq" id="YP_004889476.1">
    <property type="nucleotide sequence ID" value="NC_004567.2"/>
</dbReference>
<dbReference type="SMR" id="Q88WI0"/>
<dbReference type="STRING" id="220668.lp_1657"/>
<dbReference type="EnsemblBacteria" id="CCC78962">
    <property type="protein sequence ID" value="CCC78962"/>
    <property type="gene ID" value="lp_1657"/>
</dbReference>
<dbReference type="KEGG" id="lpl:lp_1657"/>
<dbReference type="PATRIC" id="fig|220668.9.peg.1398"/>
<dbReference type="eggNOG" id="COG0133">
    <property type="taxonomic scope" value="Bacteria"/>
</dbReference>
<dbReference type="HOGENOM" id="CLU_016734_3_1_9"/>
<dbReference type="OrthoDB" id="9766131at2"/>
<dbReference type="PhylomeDB" id="Q88WI0"/>
<dbReference type="UniPathway" id="UPA00035">
    <property type="reaction ID" value="UER00044"/>
</dbReference>
<dbReference type="Proteomes" id="UP000000432">
    <property type="component" value="Chromosome"/>
</dbReference>
<dbReference type="GO" id="GO:0005737">
    <property type="term" value="C:cytoplasm"/>
    <property type="evidence" value="ECO:0007669"/>
    <property type="project" value="TreeGrafter"/>
</dbReference>
<dbReference type="GO" id="GO:0004834">
    <property type="term" value="F:tryptophan synthase activity"/>
    <property type="evidence" value="ECO:0007669"/>
    <property type="project" value="UniProtKB-UniRule"/>
</dbReference>
<dbReference type="CDD" id="cd06446">
    <property type="entry name" value="Trp-synth_B"/>
    <property type="match status" value="1"/>
</dbReference>
<dbReference type="FunFam" id="3.40.50.1100:FF:000001">
    <property type="entry name" value="Tryptophan synthase beta chain"/>
    <property type="match status" value="1"/>
</dbReference>
<dbReference type="FunFam" id="3.40.50.1100:FF:000004">
    <property type="entry name" value="Tryptophan synthase beta chain"/>
    <property type="match status" value="1"/>
</dbReference>
<dbReference type="Gene3D" id="3.40.50.1100">
    <property type="match status" value="2"/>
</dbReference>
<dbReference type="HAMAP" id="MF_00133">
    <property type="entry name" value="Trp_synth_beta"/>
    <property type="match status" value="1"/>
</dbReference>
<dbReference type="InterPro" id="IPR006653">
    <property type="entry name" value="Trp_synth_b_CS"/>
</dbReference>
<dbReference type="InterPro" id="IPR006654">
    <property type="entry name" value="Trp_synth_beta"/>
</dbReference>
<dbReference type="InterPro" id="IPR023026">
    <property type="entry name" value="Trp_synth_beta/beta-like"/>
</dbReference>
<dbReference type="InterPro" id="IPR001926">
    <property type="entry name" value="TrpB-like_PALP"/>
</dbReference>
<dbReference type="InterPro" id="IPR036052">
    <property type="entry name" value="TrpB-like_PALP_sf"/>
</dbReference>
<dbReference type="NCBIfam" id="TIGR00263">
    <property type="entry name" value="trpB"/>
    <property type="match status" value="1"/>
</dbReference>
<dbReference type="PANTHER" id="PTHR48077:SF3">
    <property type="entry name" value="TRYPTOPHAN SYNTHASE"/>
    <property type="match status" value="1"/>
</dbReference>
<dbReference type="PANTHER" id="PTHR48077">
    <property type="entry name" value="TRYPTOPHAN SYNTHASE-RELATED"/>
    <property type="match status" value="1"/>
</dbReference>
<dbReference type="Pfam" id="PF00291">
    <property type="entry name" value="PALP"/>
    <property type="match status" value="1"/>
</dbReference>
<dbReference type="PIRSF" id="PIRSF001413">
    <property type="entry name" value="Trp_syn_beta"/>
    <property type="match status" value="1"/>
</dbReference>
<dbReference type="SUPFAM" id="SSF53686">
    <property type="entry name" value="Tryptophan synthase beta subunit-like PLP-dependent enzymes"/>
    <property type="match status" value="1"/>
</dbReference>
<dbReference type="PROSITE" id="PS00168">
    <property type="entry name" value="TRP_SYNTHASE_BETA"/>
    <property type="match status" value="1"/>
</dbReference>
<organism>
    <name type="scientific">Lactiplantibacillus plantarum (strain ATCC BAA-793 / NCIMB 8826 / WCFS1)</name>
    <name type="common">Lactobacillus plantarum</name>
    <dbReference type="NCBI Taxonomy" id="220668"/>
    <lineage>
        <taxon>Bacteria</taxon>
        <taxon>Bacillati</taxon>
        <taxon>Bacillota</taxon>
        <taxon>Bacilli</taxon>
        <taxon>Lactobacillales</taxon>
        <taxon>Lactobacillaceae</taxon>
        <taxon>Lactiplantibacillus</taxon>
    </lineage>
</organism>
<reference key="1">
    <citation type="journal article" date="2003" name="Proc. Natl. Acad. Sci. U.S.A.">
        <title>Complete genome sequence of Lactobacillus plantarum WCFS1.</title>
        <authorList>
            <person name="Kleerebezem M."/>
            <person name="Boekhorst J."/>
            <person name="van Kranenburg R."/>
            <person name="Molenaar D."/>
            <person name="Kuipers O.P."/>
            <person name="Leer R."/>
            <person name="Tarchini R."/>
            <person name="Peters S.A."/>
            <person name="Sandbrink H.M."/>
            <person name="Fiers M.W.E.J."/>
            <person name="Stiekema W."/>
            <person name="Klein Lankhorst R.M."/>
            <person name="Bron P.A."/>
            <person name="Hoffer S.M."/>
            <person name="Nierop Groot M.N."/>
            <person name="Kerkhoven R."/>
            <person name="De Vries M."/>
            <person name="Ursing B."/>
            <person name="De Vos W.M."/>
            <person name="Siezen R.J."/>
        </authorList>
    </citation>
    <scope>NUCLEOTIDE SEQUENCE [LARGE SCALE GENOMIC DNA]</scope>
    <source>
        <strain>ATCC BAA-793 / NCIMB 8826 / WCFS1</strain>
    </source>
</reference>
<reference key="2">
    <citation type="journal article" date="2012" name="J. Bacteriol.">
        <title>Complete resequencing and reannotation of the Lactobacillus plantarum WCFS1 genome.</title>
        <authorList>
            <person name="Siezen R.J."/>
            <person name="Francke C."/>
            <person name="Renckens B."/>
            <person name="Boekhorst J."/>
            <person name="Wels M."/>
            <person name="Kleerebezem M."/>
            <person name="van Hijum S.A."/>
        </authorList>
    </citation>
    <scope>NUCLEOTIDE SEQUENCE [LARGE SCALE GENOMIC DNA]</scope>
    <scope>GENOME REANNOTATION</scope>
    <source>
        <strain>ATCC BAA-793 / NCIMB 8826 / WCFS1</strain>
    </source>
</reference>
<feature type="chain" id="PRO_0000098960" description="Tryptophan synthase beta chain">
    <location>
        <begin position="1"/>
        <end position="399"/>
    </location>
</feature>
<feature type="modified residue" description="N6-(pyridoxal phosphate)lysine" evidence="1">
    <location>
        <position position="90"/>
    </location>
</feature>
<comment type="function">
    <text evidence="1">The beta subunit is responsible for the synthesis of L-tryptophan from indole and L-serine.</text>
</comment>
<comment type="catalytic activity">
    <reaction evidence="1">
        <text>(1S,2R)-1-C-(indol-3-yl)glycerol 3-phosphate + L-serine = D-glyceraldehyde 3-phosphate + L-tryptophan + H2O</text>
        <dbReference type="Rhea" id="RHEA:10532"/>
        <dbReference type="ChEBI" id="CHEBI:15377"/>
        <dbReference type="ChEBI" id="CHEBI:33384"/>
        <dbReference type="ChEBI" id="CHEBI:57912"/>
        <dbReference type="ChEBI" id="CHEBI:58866"/>
        <dbReference type="ChEBI" id="CHEBI:59776"/>
        <dbReference type="EC" id="4.2.1.20"/>
    </reaction>
</comment>
<comment type="cofactor">
    <cofactor evidence="1">
        <name>pyridoxal 5'-phosphate</name>
        <dbReference type="ChEBI" id="CHEBI:597326"/>
    </cofactor>
</comment>
<comment type="pathway">
    <text evidence="1">Amino-acid biosynthesis; L-tryptophan biosynthesis; L-tryptophan from chorismate: step 5/5.</text>
</comment>
<comment type="subunit">
    <text evidence="1">Tetramer of two alpha and two beta chains.</text>
</comment>
<comment type="similarity">
    <text evidence="1">Belongs to the TrpB family.</text>
</comment>
<protein>
    <recommendedName>
        <fullName evidence="1">Tryptophan synthase beta chain</fullName>
        <ecNumber evidence="1">4.2.1.20</ecNumber>
    </recommendedName>
</protein>
<evidence type="ECO:0000255" key="1">
    <source>
        <dbReference type="HAMAP-Rule" id="MF_00133"/>
    </source>
</evidence>